<proteinExistence type="inferred from homology"/>
<keyword id="KW-1185">Reference proteome</keyword>
<keyword id="KW-0687">Ribonucleoprotein</keyword>
<keyword id="KW-0689">Ribosomal protein</keyword>
<comment type="subunit">
    <text evidence="1">Part of the 50S ribosomal subunit.</text>
</comment>
<comment type="similarity">
    <text evidence="1">Belongs to the universal ribosomal protein uL30 family.</text>
</comment>
<protein>
    <recommendedName>
        <fullName evidence="1">Large ribosomal subunit protein uL30</fullName>
    </recommendedName>
    <alternativeName>
        <fullName evidence="2">50S ribosomal protein L30</fullName>
    </alternativeName>
</protein>
<sequence length="60" mass="6683">MATKTVKVTQTKSGIGRLPKHRATLTGLGLRRIGHTVELEDTPSVRGMINKVYYMVKVED</sequence>
<evidence type="ECO:0000255" key="1">
    <source>
        <dbReference type="HAMAP-Rule" id="MF_01371"/>
    </source>
</evidence>
<evidence type="ECO:0000305" key="2"/>
<accession>Q8EK52</accession>
<name>RL30_SHEON</name>
<dbReference type="EMBL" id="AE014299">
    <property type="protein sequence ID" value="AAN53334.1"/>
    <property type="molecule type" value="Genomic_DNA"/>
</dbReference>
<dbReference type="RefSeq" id="NP_715889.1">
    <property type="nucleotide sequence ID" value="NC_004347.2"/>
</dbReference>
<dbReference type="RefSeq" id="WP_006083582.1">
    <property type="nucleotide sequence ID" value="NZ_CP053946.1"/>
</dbReference>
<dbReference type="SMR" id="Q8EK52"/>
<dbReference type="STRING" id="211586.SO_0249"/>
<dbReference type="PaxDb" id="211586-SO_0249"/>
<dbReference type="GeneID" id="75190600"/>
<dbReference type="KEGG" id="son:SO_0249"/>
<dbReference type="PATRIC" id="fig|211586.12.peg.237"/>
<dbReference type="eggNOG" id="COG1841">
    <property type="taxonomic scope" value="Bacteria"/>
</dbReference>
<dbReference type="HOGENOM" id="CLU_131047_1_4_6"/>
<dbReference type="OrthoDB" id="9812790at2"/>
<dbReference type="PhylomeDB" id="Q8EK52"/>
<dbReference type="BioCyc" id="SONE211586:G1GMP-238-MONOMER"/>
<dbReference type="PRO" id="PR:Q8EK52"/>
<dbReference type="Proteomes" id="UP000008186">
    <property type="component" value="Chromosome"/>
</dbReference>
<dbReference type="GO" id="GO:0022625">
    <property type="term" value="C:cytosolic large ribosomal subunit"/>
    <property type="evidence" value="ECO:0000318"/>
    <property type="project" value="GO_Central"/>
</dbReference>
<dbReference type="GO" id="GO:0003735">
    <property type="term" value="F:structural constituent of ribosome"/>
    <property type="evidence" value="ECO:0007669"/>
    <property type="project" value="InterPro"/>
</dbReference>
<dbReference type="GO" id="GO:0006412">
    <property type="term" value="P:translation"/>
    <property type="evidence" value="ECO:0007669"/>
    <property type="project" value="UniProtKB-UniRule"/>
</dbReference>
<dbReference type="CDD" id="cd01658">
    <property type="entry name" value="Ribosomal_L30"/>
    <property type="match status" value="1"/>
</dbReference>
<dbReference type="FunFam" id="3.30.1390.20:FF:000001">
    <property type="entry name" value="50S ribosomal protein L30"/>
    <property type="match status" value="1"/>
</dbReference>
<dbReference type="Gene3D" id="3.30.1390.20">
    <property type="entry name" value="Ribosomal protein L30, ferredoxin-like fold domain"/>
    <property type="match status" value="1"/>
</dbReference>
<dbReference type="HAMAP" id="MF_01371_B">
    <property type="entry name" value="Ribosomal_uL30_B"/>
    <property type="match status" value="1"/>
</dbReference>
<dbReference type="InterPro" id="IPR036919">
    <property type="entry name" value="Ribo_uL30_ferredoxin-like_sf"/>
</dbReference>
<dbReference type="InterPro" id="IPR005996">
    <property type="entry name" value="Ribosomal_uL30_bac-type"/>
</dbReference>
<dbReference type="InterPro" id="IPR018038">
    <property type="entry name" value="Ribosomal_uL30_CS"/>
</dbReference>
<dbReference type="InterPro" id="IPR016082">
    <property type="entry name" value="Ribosomal_uL30_ferredoxin-like"/>
</dbReference>
<dbReference type="NCBIfam" id="TIGR01308">
    <property type="entry name" value="rpmD_bact"/>
    <property type="match status" value="1"/>
</dbReference>
<dbReference type="PANTHER" id="PTHR15892:SF2">
    <property type="entry name" value="LARGE RIBOSOMAL SUBUNIT PROTEIN UL30M"/>
    <property type="match status" value="1"/>
</dbReference>
<dbReference type="PANTHER" id="PTHR15892">
    <property type="entry name" value="MITOCHONDRIAL RIBOSOMAL PROTEIN L30"/>
    <property type="match status" value="1"/>
</dbReference>
<dbReference type="Pfam" id="PF00327">
    <property type="entry name" value="Ribosomal_L30"/>
    <property type="match status" value="1"/>
</dbReference>
<dbReference type="PIRSF" id="PIRSF002211">
    <property type="entry name" value="Ribosomal_L30_bac-type"/>
    <property type="match status" value="1"/>
</dbReference>
<dbReference type="SUPFAM" id="SSF55129">
    <property type="entry name" value="Ribosomal protein L30p/L7e"/>
    <property type="match status" value="1"/>
</dbReference>
<dbReference type="PROSITE" id="PS00634">
    <property type="entry name" value="RIBOSOMAL_L30"/>
    <property type="match status" value="1"/>
</dbReference>
<gene>
    <name evidence="1" type="primary">rpmD</name>
    <name type="ordered locus">SO_0249</name>
</gene>
<reference key="1">
    <citation type="journal article" date="2002" name="Nat. Biotechnol.">
        <title>Genome sequence of the dissimilatory metal ion-reducing bacterium Shewanella oneidensis.</title>
        <authorList>
            <person name="Heidelberg J.F."/>
            <person name="Paulsen I.T."/>
            <person name="Nelson K.E."/>
            <person name="Gaidos E.J."/>
            <person name="Nelson W.C."/>
            <person name="Read T.D."/>
            <person name="Eisen J.A."/>
            <person name="Seshadri R."/>
            <person name="Ward N.L."/>
            <person name="Methe B.A."/>
            <person name="Clayton R.A."/>
            <person name="Meyer T."/>
            <person name="Tsapin A."/>
            <person name="Scott J."/>
            <person name="Beanan M.J."/>
            <person name="Brinkac L.M."/>
            <person name="Daugherty S.C."/>
            <person name="DeBoy R.T."/>
            <person name="Dodson R.J."/>
            <person name="Durkin A.S."/>
            <person name="Haft D.H."/>
            <person name="Kolonay J.F."/>
            <person name="Madupu R."/>
            <person name="Peterson J.D."/>
            <person name="Umayam L.A."/>
            <person name="White O."/>
            <person name="Wolf A.M."/>
            <person name="Vamathevan J.J."/>
            <person name="Weidman J.F."/>
            <person name="Impraim M."/>
            <person name="Lee K."/>
            <person name="Berry K.J."/>
            <person name="Lee C."/>
            <person name="Mueller J."/>
            <person name="Khouri H.M."/>
            <person name="Gill J."/>
            <person name="Utterback T.R."/>
            <person name="McDonald L.A."/>
            <person name="Feldblyum T.V."/>
            <person name="Smith H.O."/>
            <person name="Venter J.C."/>
            <person name="Nealson K.H."/>
            <person name="Fraser C.M."/>
        </authorList>
    </citation>
    <scope>NUCLEOTIDE SEQUENCE [LARGE SCALE GENOMIC DNA]</scope>
    <source>
        <strain>ATCC 700550 / JCM 31522 / CIP 106686 / LMG 19005 / NCIMB 14063 / MR-1</strain>
    </source>
</reference>
<feature type="chain" id="PRO_0000273851" description="Large ribosomal subunit protein uL30">
    <location>
        <begin position="1"/>
        <end position="60"/>
    </location>
</feature>
<organism>
    <name type="scientific">Shewanella oneidensis (strain ATCC 700550 / JCM 31522 / CIP 106686 / LMG 19005 / NCIMB 14063 / MR-1)</name>
    <dbReference type="NCBI Taxonomy" id="211586"/>
    <lineage>
        <taxon>Bacteria</taxon>
        <taxon>Pseudomonadati</taxon>
        <taxon>Pseudomonadota</taxon>
        <taxon>Gammaproteobacteria</taxon>
        <taxon>Alteromonadales</taxon>
        <taxon>Shewanellaceae</taxon>
        <taxon>Shewanella</taxon>
    </lineage>
</organism>